<reference key="1">
    <citation type="journal article" date="2004" name="Nature">
        <title>Genome evolution in yeasts.</title>
        <authorList>
            <person name="Dujon B."/>
            <person name="Sherman D."/>
            <person name="Fischer G."/>
            <person name="Durrens P."/>
            <person name="Casaregola S."/>
            <person name="Lafontaine I."/>
            <person name="de Montigny J."/>
            <person name="Marck C."/>
            <person name="Neuveglise C."/>
            <person name="Talla E."/>
            <person name="Goffard N."/>
            <person name="Frangeul L."/>
            <person name="Aigle M."/>
            <person name="Anthouard V."/>
            <person name="Babour A."/>
            <person name="Barbe V."/>
            <person name="Barnay S."/>
            <person name="Blanchin S."/>
            <person name="Beckerich J.-M."/>
            <person name="Beyne E."/>
            <person name="Bleykasten C."/>
            <person name="Boisrame A."/>
            <person name="Boyer J."/>
            <person name="Cattolico L."/>
            <person name="Confanioleri F."/>
            <person name="de Daruvar A."/>
            <person name="Despons L."/>
            <person name="Fabre E."/>
            <person name="Fairhead C."/>
            <person name="Ferry-Dumazet H."/>
            <person name="Groppi A."/>
            <person name="Hantraye F."/>
            <person name="Hennequin C."/>
            <person name="Jauniaux N."/>
            <person name="Joyet P."/>
            <person name="Kachouri R."/>
            <person name="Kerrest A."/>
            <person name="Koszul R."/>
            <person name="Lemaire M."/>
            <person name="Lesur I."/>
            <person name="Ma L."/>
            <person name="Muller H."/>
            <person name="Nicaud J.-M."/>
            <person name="Nikolski M."/>
            <person name="Oztas S."/>
            <person name="Ozier-Kalogeropoulos O."/>
            <person name="Pellenz S."/>
            <person name="Potier S."/>
            <person name="Richard G.-F."/>
            <person name="Straub M.-L."/>
            <person name="Suleau A."/>
            <person name="Swennen D."/>
            <person name="Tekaia F."/>
            <person name="Wesolowski-Louvel M."/>
            <person name="Westhof E."/>
            <person name="Wirth B."/>
            <person name="Zeniou-Meyer M."/>
            <person name="Zivanovic Y."/>
            <person name="Bolotin-Fukuhara M."/>
            <person name="Thierry A."/>
            <person name="Bouchier C."/>
            <person name="Caudron B."/>
            <person name="Scarpelli C."/>
            <person name="Gaillardin C."/>
            <person name="Weissenbach J."/>
            <person name="Wincker P."/>
            <person name="Souciet J.-L."/>
        </authorList>
    </citation>
    <scope>NUCLEOTIDE SEQUENCE [LARGE SCALE GENOMIC DNA]</scope>
    <source>
        <strain>ATCC 36239 / CBS 767 / BCRC 21394 / JCM 1990 / NBRC 0083 / IGC 2968</strain>
    </source>
</reference>
<comment type="function">
    <text evidence="1">Component of the nascent polypeptide-associated complex (NAC), a dynamic component of the ribosomal exit tunnel, protecting the emerging polypeptides from interaction with other cytoplasmic proteins to ensure appropriate nascent protein targeting. The NAC complex also promotes mitochondrial protein import by enhancing productive ribosome interactions with the outer mitochondrial membrane and blocks the inappropriate interaction of ribosomes translating non-secretory nascent polypeptides with translocation sites in the membrane of the endoplasmic reticulum. EGD2 may also be involved in transcription regulation (By similarity).</text>
</comment>
<comment type="subunit">
    <text evidence="1">Part of the nascent polypeptide-associated complex (NAC), consisting of EGD2 and EGD1. NAC associates with ribosomes via EGD1 (By similarity).</text>
</comment>
<comment type="subcellular location">
    <subcellularLocation>
        <location evidence="1">Cytoplasm</location>
    </subcellularLocation>
    <subcellularLocation>
        <location evidence="1">Nucleus</location>
    </subcellularLocation>
    <text evidence="1">Predominantly cytoplasmic, may also transiently localize to the nucleus.</text>
</comment>
<comment type="similarity">
    <text evidence="4">Belongs to the NAC-alpha family.</text>
</comment>
<evidence type="ECO:0000250" key="1"/>
<evidence type="ECO:0000255" key="2">
    <source>
        <dbReference type="PROSITE-ProRule" id="PRU00507"/>
    </source>
</evidence>
<evidence type="ECO:0000256" key="3">
    <source>
        <dbReference type="SAM" id="MobiDB-lite"/>
    </source>
</evidence>
<evidence type="ECO:0000305" key="4"/>
<protein>
    <recommendedName>
        <fullName>Nascent polypeptide-associated complex subunit alpha</fullName>
        <shortName>NAC-alpha</shortName>
    </recommendedName>
    <alternativeName>
        <fullName>Alpha-NAC</fullName>
    </alternativeName>
</protein>
<name>NACA_DEBHA</name>
<proteinExistence type="inferred from homology"/>
<dbReference type="EMBL" id="CR382136">
    <property type="protein sequence ID" value="CAG86925.1"/>
    <property type="molecule type" value="Genomic_DNA"/>
</dbReference>
<dbReference type="RefSeq" id="XP_458781.1">
    <property type="nucleotide sequence ID" value="XM_458781.1"/>
</dbReference>
<dbReference type="SMR" id="Q6BSN9"/>
<dbReference type="FunCoup" id="Q6BSN9">
    <property type="interactions" value="609"/>
</dbReference>
<dbReference type="STRING" id="284592.Q6BSN9"/>
<dbReference type="GeneID" id="2901699"/>
<dbReference type="KEGG" id="dha:DEHA2D07370g"/>
<dbReference type="VEuPathDB" id="FungiDB:DEHA2D07370g"/>
<dbReference type="eggNOG" id="KOG2239">
    <property type="taxonomic scope" value="Eukaryota"/>
</dbReference>
<dbReference type="HOGENOM" id="CLU_057806_2_1_1"/>
<dbReference type="InParanoid" id="Q6BSN9"/>
<dbReference type="OMA" id="SQKMIFA"/>
<dbReference type="OrthoDB" id="3169036at2759"/>
<dbReference type="Proteomes" id="UP000000599">
    <property type="component" value="Chromosome D"/>
</dbReference>
<dbReference type="GO" id="GO:0005854">
    <property type="term" value="C:nascent polypeptide-associated complex"/>
    <property type="evidence" value="ECO:0007669"/>
    <property type="project" value="EnsemblFungi"/>
</dbReference>
<dbReference type="GO" id="GO:0005634">
    <property type="term" value="C:nucleus"/>
    <property type="evidence" value="ECO:0007669"/>
    <property type="project" value="UniProtKB-SubCell"/>
</dbReference>
<dbReference type="GO" id="GO:0070300">
    <property type="term" value="F:phosphatidic acid binding"/>
    <property type="evidence" value="ECO:0007669"/>
    <property type="project" value="EnsemblFungi"/>
</dbReference>
<dbReference type="GO" id="GO:0080025">
    <property type="term" value="F:phosphatidylinositol-3,5-bisphosphate binding"/>
    <property type="evidence" value="ECO:0007669"/>
    <property type="project" value="EnsemblFungi"/>
</dbReference>
<dbReference type="GO" id="GO:0032266">
    <property type="term" value="F:phosphatidylinositol-3-phosphate binding"/>
    <property type="evidence" value="ECO:0007669"/>
    <property type="project" value="EnsemblFungi"/>
</dbReference>
<dbReference type="GO" id="GO:0070273">
    <property type="term" value="F:phosphatidylinositol-4-phosphate binding"/>
    <property type="evidence" value="ECO:0007669"/>
    <property type="project" value="EnsemblFungi"/>
</dbReference>
<dbReference type="GO" id="GO:0051082">
    <property type="term" value="F:unfolded protein binding"/>
    <property type="evidence" value="ECO:0007669"/>
    <property type="project" value="EnsemblFungi"/>
</dbReference>
<dbReference type="GO" id="GO:0006613">
    <property type="term" value="P:cotranslational protein targeting to membrane"/>
    <property type="evidence" value="ECO:0007669"/>
    <property type="project" value="EnsemblFungi"/>
</dbReference>
<dbReference type="GO" id="GO:0015031">
    <property type="term" value="P:protein transport"/>
    <property type="evidence" value="ECO:0007669"/>
    <property type="project" value="UniProtKB-KW"/>
</dbReference>
<dbReference type="CDD" id="cd22054">
    <property type="entry name" value="NAC_NACA"/>
    <property type="match status" value="1"/>
</dbReference>
<dbReference type="CDD" id="cd14358">
    <property type="entry name" value="UBA_NAC_euk"/>
    <property type="match status" value="1"/>
</dbReference>
<dbReference type="FunFam" id="2.20.70.30:FF:000002">
    <property type="entry name" value="Nascent polypeptide-associated complex (NAC), alpha subunit"/>
    <property type="match status" value="1"/>
</dbReference>
<dbReference type="Gene3D" id="1.10.8.10">
    <property type="entry name" value="DNA helicase RuvA subunit, C-terminal domain"/>
    <property type="match status" value="1"/>
</dbReference>
<dbReference type="Gene3D" id="2.20.70.30">
    <property type="entry name" value="Nascent polypeptide-associated complex domain"/>
    <property type="match status" value="1"/>
</dbReference>
<dbReference type="InterPro" id="IPR016641">
    <property type="entry name" value="EGD2/NACA0like"/>
</dbReference>
<dbReference type="InterPro" id="IPR044034">
    <property type="entry name" value="NAC-like_UBA"/>
</dbReference>
<dbReference type="InterPro" id="IPR038187">
    <property type="entry name" value="NAC_A/B_dom_sf"/>
</dbReference>
<dbReference type="InterPro" id="IPR002715">
    <property type="entry name" value="Nas_poly-pep-assoc_cplx_dom"/>
</dbReference>
<dbReference type="PANTHER" id="PTHR21713">
    <property type="entry name" value="NASCENT POLYPEPTIDE ASSOCIATED COMPLEX ALPHA SUBUNIT-RELATED"/>
    <property type="match status" value="1"/>
</dbReference>
<dbReference type="Pfam" id="PF01849">
    <property type="entry name" value="NAC"/>
    <property type="match status" value="1"/>
</dbReference>
<dbReference type="Pfam" id="PF19026">
    <property type="entry name" value="UBA_HYPK"/>
    <property type="match status" value="1"/>
</dbReference>
<dbReference type="PIRSF" id="PIRSF015901">
    <property type="entry name" value="NAC_alpha"/>
    <property type="match status" value="1"/>
</dbReference>
<dbReference type="SMART" id="SM01407">
    <property type="entry name" value="NAC"/>
    <property type="match status" value="1"/>
</dbReference>
<dbReference type="PROSITE" id="PS51151">
    <property type="entry name" value="NAC_AB"/>
    <property type="match status" value="1"/>
</dbReference>
<keyword id="KW-0963">Cytoplasm</keyword>
<keyword id="KW-0539">Nucleus</keyword>
<keyword id="KW-0653">Protein transport</keyword>
<keyword id="KW-1185">Reference proteome</keyword>
<keyword id="KW-0813">Transport</keyword>
<sequence>MSIEEIPQGADVSILSKNEKKARELIKKLNLKQIKGITRVTFKQRGNLIYAIDQPDVFRSSAGTYVVFGEAKVDDMNKRIAEAQQQQAQQDALSKAAGETGEAGEEDKSQDAITADLEKASLNTNKIEEEEADDGEVDESGLDAKDIDIIVEQTQVSRAKAVKALRVHDGDMVNAIMELS</sequence>
<organism>
    <name type="scientific">Debaryomyces hansenii (strain ATCC 36239 / CBS 767 / BCRC 21394 / JCM 1990 / NBRC 0083 / IGC 2968)</name>
    <name type="common">Yeast</name>
    <name type="synonym">Torulaspora hansenii</name>
    <dbReference type="NCBI Taxonomy" id="284592"/>
    <lineage>
        <taxon>Eukaryota</taxon>
        <taxon>Fungi</taxon>
        <taxon>Dikarya</taxon>
        <taxon>Ascomycota</taxon>
        <taxon>Saccharomycotina</taxon>
        <taxon>Pichiomycetes</taxon>
        <taxon>Debaryomycetaceae</taxon>
        <taxon>Debaryomyces</taxon>
    </lineage>
</organism>
<gene>
    <name type="primary">EGD2</name>
    <name type="ordered locus">DEHA2D07370g</name>
</gene>
<accession>Q6BSN9</accession>
<feature type="chain" id="PRO_0000273488" description="Nascent polypeptide-associated complex subunit alpha">
    <location>
        <begin position="1"/>
        <end position="180"/>
    </location>
</feature>
<feature type="domain" description="NAC-A/B" evidence="2">
    <location>
        <begin position="16"/>
        <end position="80"/>
    </location>
</feature>
<feature type="domain" description="UBA">
    <location>
        <begin position="142"/>
        <end position="179"/>
    </location>
</feature>
<feature type="region of interest" description="Disordered" evidence="3">
    <location>
        <begin position="81"/>
        <end position="113"/>
    </location>
</feature>
<feature type="compositionally biased region" description="Low complexity" evidence="3">
    <location>
        <begin position="82"/>
        <end position="100"/>
    </location>
</feature>